<protein>
    <recommendedName>
        <fullName>AT-rich interactive domain-containing protein 3A</fullName>
        <shortName>ARID domain-containing protein 3A</shortName>
    </recommendedName>
    <alternativeName>
        <fullName>Bright homolog</fullName>
    </alternativeName>
    <alternativeName>
        <fullName>Dead ringer-like protein 1</fullName>
    </alternativeName>
</protein>
<accession>Q6GQD7</accession>
<comment type="function">
    <text evidence="5">Transcription factor required for smad1 and smad2-mediated responses to TGFbeta during mesoderm induction.</text>
</comment>
<comment type="subunit">
    <text evidence="1">Homodimer.</text>
</comment>
<comment type="subcellular location">
    <subcellularLocation>
        <location evidence="2">Nucleus</location>
    </subcellularLocation>
    <subcellularLocation>
        <location evidence="1">Cytoplasm</location>
    </subcellularLocation>
    <text evidence="1">Shuttles between nucleus and cytoplasm.</text>
</comment>
<comment type="developmental stage">
    <text evidence="5">Expressed at low levels during early embryogenesis and at highest levels between NF19 and NF28. Expressed in the involuting mesoderm of the gastrula. Expressed in non-neural ectoderm of the early neurula, and excluded from neural plate.</text>
</comment>
<evidence type="ECO:0000250" key="1"/>
<evidence type="ECO:0000255" key="2">
    <source>
        <dbReference type="PROSITE-ProRule" id="PRU00355"/>
    </source>
</evidence>
<evidence type="ECO:0000255" key="3">
    <source>
        <dbReference type="PROSITE-ProRule" id="PRU00819"/>
    </source>
</evidence>
<evidence type="ECO:0000256" key="4">
    <source>
        <dbReference type="SAM" id="MobiDB-lite"/>
    </source>
</evidence>
<evidence type="ECO:0000269" key="5">
    <source>
    </source>
</evidence>
<proteinExistence type="evidence at transcript level"/>
<dbReference type="EMBL" id="AY787401">
    <property type="protein sequence ID" value="AAW78333.1"/>
    <property type="molecule type" value="mRNA"/>
</dbReference>
<dbReference type="EMBL" id="BC072808">
    <property type="protein sequence ID" value="AAH72808.1"/>
    <property type="molecule type" value="mRNA"/>
</dbReference>
<dbReference type="RefSeq" id="NP_001085467.1">
    <property type="nucleotide sequence ID" value="NM_001091998.1"/>
</dbReference>
<dbReference type="RefSeq" id="XP_018092210.1">
    <property type="nucleotide sequence ID" value="XM_018236721.1"/>
</dbReference>
<dbReference type="RefSeq" id="XP_018092218.1">
    <property type="nucleotide sequence ID" value="XM_018236729.1"/>
</dbReference>
<dbReference type="RefSeq" id="XP_018092229.1">
    <property type="nucleotide sequence ID" value="XM_018236740.1"/>
</dbReference>
<dbReference type="RefSeq" id="XP_018092236.1">
    <property type="nucleotide sequence ID" value="XM_018236747.1"/>
</dbReference>
<dbReference type="RefSeq" id="XP_018092242.1">
    <property type="nucleotide sequence ID" value="XM_018236753.1"/>
</dbReference>
<dbReference type="RefSeq" id="XP_018092248.1">
    <property type="nucleotide sequence ID" value="XM_018236759.1"/>
</dbReference>
<dbReference type="RefSeq" id="XP_018092257.1">
    <property type="nucleotide sequence ID" value="XM_018236768.1"/>
</dbReference>
<dbReference type="RefSeq" id="XP_018092264.1">
    <property type="nucleotide sequence ID" value="XM_018236775.1"/>
</dbReference>
<dbReference type="SMR" id="Q6GQD7"/>
<dbReference type="BioGRID" id="102056">
    <property type="interactions" value="1"/>
</dbReference>
<dbReference type="IntAct" id="Q6GQD7">
    <property type="interactions" value="1"/>
</dbReference>
<dbReference type="DNASU" id="443893"/>
<dbReference type="GeneID" id="443893"/>
<dbReference type="KEGG" id="xla:443893"/>
<dbReference type="AGR" id="Xenbase:XB-GENE-945270"/>
<dbReference type="CTD" id="443893"/>
<dbReference type="Xenbase" id="XB-GENE-945270">
    <property type="gene designation" value="arid3a.S"/>
</dbReference>
<dbReference type="OMA" id="HIHKIKK"/>
<dbReference type="OrthoDB" id="10044343at2759"/>
<dbReference type="Proteomes" id="UP000186698">
    <property type="component" value="Chromosome 1S"/>
</dbReference>
<dbReference type="Bgee" id="443893">
    <property type="expression patterns" value="Expressed in blastula and 11 other cell types or tissues"/>
</dbReference>
<dbReference type="GO" id="GO:0005737">
    <property type="term" value="C:cytoplasm"/>
    <property type="evidence" value="ECO:0007669"/>
    <property type="project" value="UniProtKB-SubCell"/>
</dbReference>
<dbReference type="GO" id="GO:0005634">
    <property type="term" value="C:nucleus"/>
    <property type="evidence" value="ECO:0000318"/>
    <property type="project" value="GO_Central"/>
</dbReference>
<dbReference type="GO" id="GO:0003677">
    <property type="term" value="F:DNA binding"/>
    <property type="evidence" value="ECO:0000318"/>
    <property type="project" value="GO_Central"/>
</dbReference>
<dbReference type="GO" id="GO:0006357">
    <property type="term" value="P:regulation of transcription by RNA polymerase II"/>
    <property type="evidence" value="ECO:0000318"/>
    <property type="project" value="GO_Central"/>
</dbReference>
<dbReference type="CDD" id="cd16878">
    <property type="entry name" value="ARID_ARID3A"/>
    <property type="match status" value="1"/>
</dbReference>
<dbReference type="FunFam" id="1.10.150.60:FF:000006">
    <property type="entry name" value="AT-rich interactive domain-containing protein 3A"/>
    <property type="match status" value="1"/>
</dbReference>
<dbReference type="Gene3D" id="1.10.150.60">
    <property type="entry name" value="ARID DNA-binding domain"/>
    <property type="match status" value="1"/>
</dbReference>
<dbReference type="InterPro" id="IPR045147">
    <property type="entry name" value="ARI3A/B/C"/>
</dbReference>
<dbReference type="InterPro" id="IPR001606">
    <property type="entry name" value="ARID_dom"/>
</dbReference>
<dbReference type="InterPro" id="IPR036431">
    <property type="entry name" value="ARID_dom_sf"/>
</dbReference>
<dbReference type="InterPro" id="IPR023334">
    <property type="entry name" value="REKLES_domain"/>
</dbReference>
<dbReference type="PANTHER" id="PTHR15348:SF1">
    <property type="entry name" value="AT-RICH INTERACTIVE DOMAIN-CONTAINING PROTEIN 3A"/>
    <property type="match status" value="1"/>
</dbReference>
<dbReference type="PANTHER" id="PTHR15348">
    <property type="entry name" value="AT-RICH INTERACTIVE DOMAIN-CONTAINING PROTEIN ARID DOMAIN- CONTAINING PROTEIN DEAD RINGER PROTEIN B-CELL REGULATOR OF IGH TRANSCRIPTION BRIGHT"/>
    <property type="match status" value="1"/>
</dbReference>
<dbReference type="Pfam" id="PF01388">
    <property type="entry name" value="ARID"/>
    <property type="match status" value="1"/>
</dbReference>
<dbReference type="SMART" id="SM01014">
    <property type="entry name" value="ARID"/>
    <property type="match status" value="1"/>
</dbReference>
<dbReference type="SMART" id="SM00501">
    <property type="entry name" value="BRIGHT"/>
    <property type="match status" value="1"/>
</dbReference>
<dbReference type="SUPFAM" id="SSF46774">
    <property type="entry name" value="ARID-like"/>
    <property type="match status" value="1"/>
</dbReference>
<dbReference type="PROSITE" id="PS51011">
    <property type="entry name" value="ARID"/>
    <property type="match status" value="1"/>
</dbReference>
<dbReference type="PROSITE" id="PS51486">
    <property type="entry name" value="REKLES"/>
    <property type="match status" value="1"/>
</dbReference>
<gene>
    <name type="primary">arid3a</name>
    <name type="synonym">dril1</name>
</gene>
<name>ARI3A_XENLA</name>
<keyword id="KW-0963">Cytoplasm</keyword>
<keyword id="KW-0217">Developmental protein</keyword>
<keyword id="KW-0238">DNA-binding</keyword>
<keyword id="KW-0539">Nucleus</keyword>
<keyword id="KW-1185">Reference proteome</keyword>
<keyword id="KW-0804">Transcription</keyword>
<keyword id="KW-0805">Transcription regulation</keyword>
<reference key="1">
    <citation type="journal article" date="2005" name="Dev. Biol.">
        <title>The ARID domain protein dril1 is necessary for TGF(beta) signaling in Xenopus embryos.</title>
        <authorList>
            <person name="Callery E.M."/>
            <person name="Smith J.C."/>
            <person name="Thomsen G.H."/>
        </authorList>
    </citation>
    <scope>NUCLEOTIDE SEQUENCE [MRNA]</scope>
    <scope>DEVELOPMENTAL STAGE</scope>
    <scope>FUNCTION</scope>
</reference>
<reference key="2">
    <citation type="submission" date="2004-06" db="EMBL/GenBank/DDBJ databases">
        <authorList>
            <consortium name="NIH - Xenopus Gene Collection (XGC) project"/>
        </authorList>
    </citation>
    <scope>NUCLEOTIDE SEQUENCE [LARGE SCALE MRNA]</scope>
    <source>
        <tissue>Embryo</tissue>
    </source>
</reference>
<sequence>MKLQAVMETLQRQQRARLQQELEARQLQQDSSEGRTPPSAGYPGNGSDEAEPEALKIQRAQAAALAAMRAAAAGLSQQPSPAASEEEDGESMASDEEDEKERDGESERYQDMASEEEDLKGKWDEDDFEDEGEDEYEDMEEGIGVNEAGRVGKGSTLPPKHSSQQAFPSQRSQGAERAGLPLSGHPQLQDHGDWTYEEQFKQLYELDGDPKRKEFLDDLFSFMQKRGTPVNRIPIMAKQVLDLYMLYVLVTEKGGLVEVINKKLWREITKGLNLPTSITSAAFTLRTQYMKYLYPYECEKRGLSNPNELQAAIDSNRREGRRQSFGGTLFTYSPSGAPSMLSSPKLQVSGLSLGGAALNGSTLSSMQKIKKEEDSPISLAMPPRIPVTLAGHSMVAAQVAAQAAALEQLREKLESGEPPEKKMALGSEEQQRIIQRTIQHNLLAMTAQLPMNIRINSQAEGRQDSAVNLTTNGTNSISMSVELNGIVYTGVLFAQPPTSASGTSKGSSNRTGSIGGGSSNSQAAPPSTPSAPNSNNPSP</sequence>
<feature type="chain" id="PRO_0000295160" description="AT-rich interactive domain-containing protein 3A">
    <location>
        <begin position="1"/>
        <end position="539"/>
    </location>
</feature>
<feature type="domain" description="ARID" evidence="2">
    <location>
        <begin position="209"/>
        <end position="301"/>
    </location>
</feature>
<feature type="domain" description="REKLES" evidence="3">
    <location>
        <begin position="404"/>
        <end position="499"/>
    </location>
</feature>
<feature type="region of interest" description="Disordered" evidence="4">
    <location>
        <begin position="1"/>
        <end position="190"/>
    </location>
</feature>
<feature type="region of interest" description="Important for nuclear localization" evidence="1">
    <location>
        <begin position="405"/>
        <end position="448"/>
    </location>
</feature>
<feature type="region of interest" description="Homodimerization" evidence="1">
    <location>
        <begin position="450"/>
        <end position="471"/>
    </location>
</feature>
<feature type="region of interest" description="Important for cytoplasmic localization" evidence="1">
    <location>
        <begin position="495"/>
        <end position="502"/>
    </location>
</feature>
<feature type="region of interest" description="Disordered" evidence="4">
    <location>
        <begin position="497"/>
        <end position="539"/>
    </location>
</feature>
<feature type="compositionally biased region" description="Low complexity" evidence="4">
    <location>
        <begin position="55"/>
        <end position="73"/>
    </location>
</feature>
<feature type="compositionally biased region" description="Acidic residues" evidence="4">
    <location>
        <begin position="84"/>
        <end position="100"/>
    </location>
</feature>
<feature type="compositionally biased region" description="Basic and acidic residues" evidence="4">
    <location>
        <begin position="101"/>
        <end position="110"/>
    </location>
</feature>
<feature type="compositionally biased region" description="Acidic residues" evidence="4">
    <location>
        <begin position="113"/>
        <end position="141"/>
    </location>
</feature>
<feature type="compositionally biased region" description="Polar residues" evidence="4">
    <location>
        <begin position="161"/>
        <end position="173"/>
    </location>
</feature>
<feature type="compositionally biased region" description="Polar residues" evidence="4">
    <location>
        <begin position="497"/>
        <end position="512"/>
    </location>
</feature>
<feature type="compositionally biased region" description="Low complexity" evidence="4">
    <location>
        <begin position="519"/>
        <end position="539"/>
    </location>
</feature>
<organism>
    <name type="scientific">Xenopus laevis</name>
    <name type="common">African clawed frog</name>
    <dbReference type="NCBI Taxonomy" id="8355"/>
    <lineage>
        <taxon>Eukaryota</taxon>
        <taxon>Metazoa</taxon>
        <taxon>Chordata</taxon>
        <taxon>Craniata</taxon>
        <taxon>Vertebrata</taxon>
        <taxon>Euteleostomi</taxon>
        <taxon>Amphibia</taxon>
        <taxon>Batrachia</taxon>
        <taxon>Anura</taxon>
        <taxon>Pipoidea</taxon>
        <taxon>Pipidae</taxon>
        <taxon>Xenopodinae</taxon>
        <taxon>Xenopus</taxon>
        <taxon>Xenopus</taxon>
    </lineage>
</organism>